<reference evidence="6" key="1">
    <citation type="journal article" date="2012" name="Biol. Chem.">
        <title>Development of a host blood meal database: de novo sequencing of hemoglobin from nine small mammals using mass spectrometry.</title>
        <authorList>
            <person name="Laskay U.A."/>
            <person name="Burg J."/>
            <person name="Kaleta E.J."/>
            <person name="Vilcins I.M."/>
            <person name="Telford Iii S.R."/>
            <person name="Barbour A.G."/>
            <person name="Wysocki V.H."/>
        </authorList>
    </citation>
    <scope>PROTEIN SEQUENCE</scope>
    <source>
        <tissue evidence="4">Erythrocyte</tissue>
    </source>
</reference>
<name>HBA_SCICA</name>
<comment type="function">
    <text evidence="6">Involved in oxygen transport from the lung to the various peripheral tissues.</text>
</comment>
<comment type="subunit">
    <text evidence="6">Heterotetramer of two alpha chains and two beta chains.</text>
</comment>
<comment type="tissue specificity">
    <text evidence="6">Red blood cells.</text>
</comment>
<comment type="similarity">
    <text evidence="3">Belongs to the globin family.</text>
</comment>
<protein>
    <recommendedName>
        <fullName evidence="5">Hemoglobin subunit alpha</fullName>
    </recommendedName>
</protein>
<feature type="chain" id="PRO_0000415588" description="Hemoglobin subunit alpha">
    <location>
        <begin position="1"/>
        <end position="141"/>
    </location>
</feature>
<feature type="domain" description="Globin" evidence="3">
    <location>
        <begin position="1"/>
        <end position="141"/>
    </location>
</feature>
<feature type="binding site" evidence="3">
    <location>
        <position position="58"/>
    </location>
    <ligand>
        <name>O2</name>
        <dbReference type="ChEBI" id="CHEBI:15379"/>
    </ligand>
</feature>
<feature type="binding site" description="proximal binding residue" evidence="3">
    <location>
        <position position="87"/>
    </location>
    <ligand>
        <name>heme b</name>
        <dbReference type="ChEBI" id="CHEBI:60344"/>
    </ligand>
    <ligandPart>
        <name>Fe</name>
        <dbReference type="ChEBI" id="CHEBI:18248"/>
    </ligandPart>
</feature>
<feature type="modified residue" description="Phosphoserine" evidence="2">
    <location>
        <position position="3"/>
    </location>
</feature>
<feature type="modified residue" description="N6-succinyllysine" evidence="1">
    <location>
        <position position="7"/>
    </location>
</feature>
<feature type="modified residue" description="Phosphothreonine" evidence="2">
    <location>
        <position position="8"/>
    </location>
</feature>
<feature type="modified residue" description="N6-succinyllysine" evidence="1">
    <location>
        <position position="11"/>
    </location>
</feature>
<feature type="modified residue" description="N6-acetyllysine; alternate" evidence="2">
    <location>
        <position position="16"/>
    </location>
</feature>
<feature type="modified residue" description="N6-succinyllysine; alternate" evidence="1">
    <location>
        <position position="16"/>
    </location>
</feature>
<feature type="modified residue" description="Phosphoserine" evidence="2">
    <location>
        <position position="35"/>
    </location>
</feature>
<feature type="modified residue" description="N6-succinyllysine" evidence="1">
    <location>
        <position position="40"/>
    </location>
</feature>
<feature type="modified residue" description="Phosphoserine" evidence="2">
    <location>
        <position position="49"/>
    </location>
</feature>
<feature type="modified residue" description="Phosphoserine" evidence="1">
    <location>
        <position position="102"/>
    </location>
</feature>
<feature type="modified residue" description="Phosphothreonine" evidence="1">
    <location>
        <position position="108"/>
    </location>
</feature>
<feature type="modified residue" description="Phosphoserine" evidence="1">
    <location>
        <position position="124"/>
    </location>
</feature>
<feature type="modified residue" description="Phosphoserine" evidence="1">
    <location>
        <position position="131"/>
    </location>
</feature>
<feature type="modified residue" description="Phosphothreonine" evidence="1">
    <location>
        <position position="134"/>
    </location>
</feature>
<feature type="modified residue" description="Phosphothreonine" evidence="1">
    <location>
        <position position="137"/>
    </location>
</feature>
<feature type="modified residue" description="Phosphoserine" evidence="1">
    <location>
        <position position="138"/>
    </location>
</feature>
<feature type="unsure residue" description="L or I" evidence="4">
    <location>
        <position position="2"/>
    </location>
</feature>
<feature type="unsure residue" description="L or I" evidence="4">
    <location>
        <position position="17"/>
    </location>
</feature>
<feature type="unsure residue" description="L or I" evidence="4">
    <location>
        <position position="29"/>
    </location>
</feature>
<feature type="unsure residue" description="L or I" evidence="4">
    <location>
        <position position="34"/>
    </location>
</feature>
<feature type="unsure residue" description="L or I" evidence="4">
    <location>
        <position position="48"/>
    </location>
</feature>
<feature type="unsure residue" description="L or I" evidence="4">
    <location>
        <position position="55"/>
    </location>
</feature>
<feature type="unsure residue" description="L or I" evidence="4">
    <location>
        <position position="66"/>
    </location>
</feature>
<feature type="unsure residue" description="L or I" evidence="4">
    <location>
        <position position="73"/>
    </location>
</feature>
<feature type="unsure residue" description="L or I" evidence="4">
    <location>
        <position position="76"/>
    </location>
</feature>
<feature type="unsure residue" description="L or I" evidence="4">
    <location>
        <position position="80"/>
    </location>
</feature>
<feature type="unsure residue" description="L or I" evidence="4">
    <location>
        <position position="83"/>
    </location>
</feature>
<feature type="unsure residue" description="L or I" evidence="4">
    <location>
        <position position="86"/>
    </location>
</feature>
<feature type="unsure residue" description="L or I" evidence="4">
    <location>
        <position position="91"/>
    </location>
</feature>
<feature type="unsure residue" description="L or I" evidence="4">
    <location>
        <position position="100"/>
    </location>
</feature>
<feature type="unsure residue" description="L or I" evidence="4">
    <location>
        <position position="101"/>
    </location>
</feature>
<feature type="unsure residue" description="L or I" evidence="4">
    <location>
        <position position="105"/>
    </location>
</feature>
<feature type="unsure residue" description="L or I" evidence="4">
    <location>
        <position position="106"/>
    </location>
</feature>
<feature type="unsure residue" description="L or I" evidence="4">
    <location>
        <position position="109"/>
    </location>
</feature>
<feature type="unsure residue" description="L or I" evidence="4">
    <location>
        <position position="125"/>
    </location>
</feature>
<feature type="unsure residue" description="L or I" evidence="4">
    <location>
        <position position="129"/>
    </location>
</feature>
<feature type="unsure residue" description="L or I" evidence="4">
    <location>
        <position position="136"/>
    </location>
</feature>
<keyword id="KW-0007">Acetylation</keyword>
<keyword id="KW-0903">Direct protein sequencing</keyword>
<keyword id="KW-0349">Heme</keyword>
<keyword id="KW-0408">Iron</keyword>
<keyword id="KW-0479">Metal-binding</keyword>
<keyword id="KW-0561">Oxygen transport</keyword>
<keyword id="KW-0597">Phosphoprotein</keyword>
<keyword id="KW-0813">Transport</keyword>
<evidence type="ECO:0000250" key="1">
    <source>
        <dbReference type="UniProtKB" id="P01942"/>
    </source>
</evidence>
<evidence type="ECO:0000250" key="2">
    <source>
        <dbReference type="UniProtKB" id="P69905"/>
    </source>
</evidence>
<evidence type="ECO:0000255" key="3">
    <source>
        <dbReference type="PROSITE-ProRule" id="PRU00238"/>
    </source>
</evidence>
<evidence type="ECO:0000269" key="4">
    <source>
    </source>
</evidence>
<evidence type="ECO:0000303" key="5">
    <source>
    </source>
</evidence>
<evidence type="ECO:0000305" key="6"/>
<dbReference type="SMR" id="B3EWD1"/>
<dbReference type="GO" id="GO:0072562">
    <property type="term" value="C:blood microparticle"/>
    <property type="evidence" value="ECO:0007669"/>
    <property type="project" value="TreeGrafter"/>
</dbReference>
<dbReference type="GO" id="GO:0031838">
    <property type="term" value="C:haptoglobin-hemoglobin complex"/>
    <property type="evidence" value="ECO:0007669"/>
    <property type="project" value="TreeGrafter"/>
</dbReference>
<dbReference type="GO" id="GO:0005833">
    <property type="term" value="C:hemoglobin complex"/>
    <property type="evidence" value="ECO:0007669"/>
    <property type="project" value="InterPro"/>
</dbReference>
<dbReference type="GO" id="GO:0031720">
    <property type="term" value="F:haptoglobin binding"/>
    <property type="evidence" value="ECO:0007669"/>
    <property type="project" value="TreeGrafter"/>
</dbReference>
<dbReference type="GO" id="GO:0020037">
    <property type="term" value="F:heme binding"/>
    <property type="evidence" value="ECO:0007669"/>
    <property type="project" value="InterPro"/>
</dbReference>
<dbReference type="GO" id="GO:0005506">
    <property type="term" value="F:iron ion binding"/>
    <property type="evidence" value="ECO:0007669"/>
    <property type="project" value="InterPro"/>
</dbReference>
<dbReference type="GO" id="GO:0043177">
    <property type="term" value="F:organic acid binding"/>
    <property type="evidence" value="ECO:0007669"/>
    <property type="project" value="TreeGrafter"/>
</dbReference>
<dbReference type="GO" id="GO:0019825">
    <property type="term" value="F:oxygen binding"/>
    <property type="evidence" value="ECO:0007669"/>
    <property type="project" value="InterPro"/>
</dbReference>
<dbReference type="GO" id="GO:0005344">
    <property type="term" value="F:oxygen carrier activity"/>
    <property type="evidence" value="ECO:0007669"/>
    <property type="project" value="UniProtKB-KW"/>
</dbReference>
<dbReference type="GO" id="GO:0004601">
    <property type="term" value="F:peroxidase activity"/>
    <property type="evidence" value="ECO:0007669"/>
    <property type="project" value="TreeGrafter"/>
</dbReference>
<dbReference type="GO" id="GO:0042744">
    <property type="term" value="P:hydrogen peroxide catabolic process"/>
    <property type="evidence" value="ECO:0007669"/>
    <property type="project" value="TreeGrafter"/>
</dbReference>
<dbReference type="CDD" id="cd08927">
    <property type="entry name" value="Hb-alpha-like"/>
    <property type="match status" value="1"/>
</dbReference>
<dbReference type="FunFam" id="1.10.490.10:FF:000002">
    <property type="entry name" value="Hemoglobin subunit alpha"/>
    <property type="match status" value="1"/>
</dbReference>
<dbReference type="Gene3D" id="1.10.490.10">
    <property type="entry name" value="Globins"/>
    <property type="match status" value="1"/>
</dbReference>
<dbReference type="InterPro" id="IPR000971">
    <property type="entry name" value="Globin"/>
</dbReference>
<dbReference type="InterPro" id="IPR009050">
    <property type="entry name" value="Globin-like_sf"/>
</dbReference>
<dbReference type="InterPro" id="IPR012292">
    <property type="entry name" value="Globin/Proto"/>
</dbReference>
<dbReference type="InterPro" id="IPR002338">
    <property type="entry name" value="Hemoglobin_a-typ"/>
</dbReference>
<dbReference type="InterPro" id="IPR050056">
    <property type="entry name" value="Hemoglobin_oxygen_transport"/>
</dbReference>
<dbReference type="InterPro" id="IPR002339">
    <property type="entry name" value="Hemoglobin_pi"/>
</dbReference>
<dbReference type="PANTHER" id="PTHR11442">
    <property type="entry name" value="HEMOGLOBIN FAMILY MEMBER"/>
    <property type="match status" value="1"/>
</dbReference>
<dbReference type="PANTHER" id="PTHR11442:SF48">
    <property type="entry name" value="HEMOGLOBIN SUBUNIT ALPHA"/>
    <property type="match status" value="1"/>
</dbReference>
<dbReference type="Pfam" id="PF00042">
    <property type="entry name" value="Globin"/>
    <property type="match status" value="1"/>
</dbReference>
<dbReference type="PRINTS" id="PR00612">
    <property type="entry name" value="ALPHAHAEM"/>
</dbReference>
<dbReference type="PRINTS" id="PR00815">
    <property type="entry name" value="PIHAEM"/>
</dbReference>
<dbReference type="SUPFAM" id="SSF46458">
    <property type="entry name" value="Globin-like"/>
    <property type="match status" value="1"/>
</dbReference>
<dbReference type="PROSITE" id="PS01033">
    <property type="entry name" value="GLOBIN"/>
    <property type="match status" value="1"/>
</dbReference>
<organism>
    <name type="scientific">Sciurus carolinensis</name>
    <name type="common">Eastern gray squirrel</name>
    <dbReference type="NCBI Taxonomy" id="30640"/>
    <lineage>
        <taxon>Eukaryota</taxon>
        <taxon>Metazoa</taxon>
        <taxon>Chordata</taxon>
        <taxon>Craniata</taxon>
        <taxon>Vertebrata</taxon>
        <taxon>Euteleostomi</taxon>
        <taxon>Mammalia</taxon>
        <taxon>Eutheria</taxon>
        <taxon>Euarchontoglires</taxon>
        <taxon>Glires</taxon>
        <taxon>Rodentia</taxon>
        <taxon>Sciuromorpha</taxon>
        <taxon>Sciuridae</taxon>
        <taxon>Sciurinae</taxon>
        <taxon>Sciurini</taxon>
        <taxon>Sciurus</taxon>
    </lineage>
</organism>
<sequence>VLSAADKTNVKASWEKLGGHPGAFGGEALDRMFLSFPTTKTYFHHFDLSPGSSNLKTHGKKVADALANAAGHLDDLPGALSTLSDLHAHKLRVDPVNFKLLSHCLLVTLAAHMPADFTPAVHASLDKFLASVSTVLTSKYR</sequence>
<proteinExistence type="evidence at protein level"/>
<accession>B3EWD1</accession>